<accession>B9DIT7</accession>
<gene>
    <name evidence="1" type="primary">addB</name>
    <name type="ordered locus">Sca_0574</name>
</gene>
<name>ADDB_STACT</name>
<comment type="function">
    <text evidence="1">The heterodimer acts as both an ATP-dependent DNA helicase and an ATP-dependent, dual-direction single-stranded exonuclease. Recognizes the chi site generating a DNA molecule suitable for the initiation of homologous recombination. The AddB subunit has 5' -&gt; 3' nuclease activity but not helicase activity.</text>
</comment>
<comment type="cofactor">
    <cofactor evidence="1">
        <name>Mg(2+)</name>
        <dbReference type="ChEBI" id="CHEBI:18420"/>
    </cofactor>
</comment>
<comment type="cofactor">
    <cofactor evidence="1">
        <name>[4Fe-4S] cluster</name>
        <dbReference type="ChEBI" id="CHEBI:49883"/>
    </cofactor>
    <text evidence="1">Binds 1 [4Fe-4S] cluster.</text>
</comment>
<comment type="subunit">
    <text evidence="1">Heterodimer of AddA and AddB.</text>
</comment>
<comment type="miscellaneous">
    <text evidence="1">Despite having conserved helicase domains, this subunit does not have helicase activity.</text>
</comment>
<comment type="similarity">
    <text evidence="1">Belongs to the helicase family. AddB/RexB type 1 subfamily.</text>
</comment>
<sequence length="1155" mass="134146">MSQLNAYIGRAGTGKSHAMLDEIKTKMKQDPLGDPIIIIAPTQSTFQLEQDFVKDPELNGSLRTEVLHFERLSHRIFQEIGGLTEEYASKGALEMMIFDILQSHRSELNLYQSQTKYYGFSAKLSEQIQDFKKYAVSPEQLEQFISENPLQTRTQDKLHDIALVYRHLEERLADNFVSSEDTLYKFIEKMDESKWLKRAEIYIDGFHNFSTLEYQIIEKLAQCAKSVSILLTTNGDKDPFSLFRKTSSTLTHIEEIAQRQNIDFNLRRFTKQERFENRDLSHLEHSFNEVFFDKAAAEGNINILETSNVREEVNAIARDIIRKAREENIRFQDVAVLYRDETYAHLMESVFPEFDIPFNIDTKKSMTHHPVMEMIRSLLEVIESKWSFEPLMRLFKTQVLTKKFKDNRYLTDILENYVLERGIYGQRWLDDKYFKIEQFNLMGLKRQPMTEETEADYQRVIDLKNYVIDKILRFEKALAEADTAETYAAAFYEAFEQFNLPSQLMTERDELDLAGEHQQAEELDQVWNGFIQTLDDLATVFGNREMTQKRFLELFDVGLEQLEFVMIPQTLDQVSIGSMDLAKVDNKKHIYMLGMNDGTMPQAISNSGLISDDEKKYFQEETQLELSPTADVLQMDEAFVCYIAMTRASTHVTFSYSLMGLNNDDKEVSPFIQNIRDLYTNLDVLNVQYAAQHNPLTVMEHPHQTKIALFEELQSWLNHELTAETWLEAYQAMLHNERLSRGLQYLTSALTFDNKTIQLNQSLSKALYGDKINASVSRFEGYQQCPFKHYTSHGLRLNERTKYKLENFDLGDIFHSVLKYIADKIHGDFRNLTDASIRKLTQEALENILPEVQYNLLNSSAYYRYMSVRIGAIVQSTLTALKYQGTFSKFRPQAFEKSFRKNPKSNEQLAAESLYTSQGISINIRGQIDRIDTFNSKDRSFVNIIDYKSSGYSGTLDLTKVYYGLQMQMMTYMDVVLQNKERLNLAETTEPGGLLYFHVHEPRVNFANWAEMDEDKRQEELLKSFKLNGLINSDPEVLDAEDTRLEPKFKSDIVPIDVGAKGNLNKSSKVADSQTIYKFIEHNKNNFIQIASDIMDGHTQVAPMKYKQKLPCEYCNYRSVCHVDGMIDSKKYRTVDESINPIDLLNQESDEDDEE</sequence>
<evidence type="ECO:0000255" key="1">
    <source>
        <dbReference type="HAMAP-Rule" id="MF_01452"/>
    </source>
</evidence>
<proteinExistence type="inferred from homology"/>
<dbReference type="EC" id="3.1.-.-" evidence="1"/>
<dbReference type="EMBL" id="AM295250">
    <property type="protein sequence ID" value="CAL27488.1"/>
    <property type="molecule type" value="Genomic_DNA"/>
</dbReference>
<dbReference type="RefSeq" id="WP_015899832.1">
    <property type="nucleotide sequence ID" value="NC_012121.1"/>
</dbReference>
<dbReference type="SMR" id="B9DIT7"/>
<dbReference type="KEGG" id="sca:SCA_0574"/>
<dbReference type="eggNOG" id="COG3857">
    <property type="taxonomic scope" value="Bacteria"/>
</dbReference>
<dbReference type="HOGENOM" id="CLU_007838_0_0_9"/>
<dbReference type="OrthoDB" id="9758506at2"/>
<dbReference type="BioCyc" id="SCAR396513:SCA_RS02935-MONOMER"/>
<dbReference type="Proteomes" id="UP000000444">
    <property type="component" value="Chromosome"/>
</dbReference>
<dbReference type="GO" id="GO:0051539">
    <property type="term" value="F:4 iron, 4 sulfur cluster binding"/>
    <property type="evidence" value="ECO:0007669"/>
    <property type="project" value="UniProtKB-KW"/>
</dbReference>
<dbReference type="GO" id="GO:0008409">
    <property type="term" value="F:5'-3' exonuclease activity"/>
    <property type="evidence" value="ECO:0007669"/>
    <property type="project" value="UniProtKB-UniRule"/>
</dbReference>
<dbReference type="GO" id="GO:0005524">
    <property type="term" value="F:ATP binding"/>
    <property type="evidence" value="ECO:0007669"/>
    <property type="project" value="UniProtKB-UniRule"/>
</dbReference>
<dbReference type="GO" id="GO:0003690">
    <property type="term" value="F:double-stranded DNA binding"/>
    <property type="evidence" value="ECO:0007669"/>
    <property type="project" value="UniProtKB-UniRule"/>
</dbReference>
<dbReference type="GO" id="GO:0004386">
    <property type="term" value="F:helicase activity"/>
    <property type="evidence" value="ECO:0007669"/>
    <property type="project" value="UniProtKB-KW"/>
</dbReference>
<dbReference type="GO" id="GO:0046872">
    <property type="term" value="F:metal ion binding"/>
    <property type="evidence" value="ECO:0007669"/>
    <property type="project" value="UniProtKB-KW"/>
</dbReference>
<dbReference type="GO" id="GO:0000724">
    <property type="term" value="P:double-strand break repair via homologous recombination"/>
    <property type="evidence" value="ECO:0007669"/>
    <property type="project" value="UniProtKB-UniRule"/>
</dbReference>
<dbReference type="Gene3D" id="3.90.320.10">
    <property type="match status" value="1"/>
</dbReference>
<dbReference type="Gene3D" id="3.40.50.300">
    <property type="entry name" value="P-loop containing nucleotide triphosphate hydrolases"/>
    <property type="match status" value="3"/>
</dbReference>
<dbReference type="HAMAP" id="MF_01452">
    <property type="entry name" value="AddB_type1"/>
    <property type="match status" value="1"/>
</dbReference>
<dbReference type="InterPro" id="IPR049035">
    <property type="entry name" value="ADDB_N"/>
</dbReference>
<dbReference type="InterPro" id="IPR014140">
    <property type="entry name" value="DNA_helicase_suAddB"/>
</dbReference>
<dbReference type="InterPro" id="IPR014017">
    <property type="entry name" value="DNA_helicase_UvrD-like_C"/>
</dbReference>
<dbReference type="InterPro" id="IPR027417">
    <property type="entry name" value="P-loop_NTPase"/>
</dbReference>
<dbReference type="InterPro" id="IPR011604">
    <property type="entry name" value="PDDEXK-like_dom_sf"/>
</dbReference>
<dbReference type="InterPro" id="IPR038726">
    <property type="entry name" value="PDDEXK_AddAB-type"/>
</dbReference>
<dbReference type="NCBIfam" id="TIGR02773">
    <property type="entry name" value="addB_Gpos"/>
    <property type="match status" value="1"/>
</dbReference>
<dbReference type="PANTHER" id="PTHR30591">
    <property type="entry name" value="RECBCD ENZYME SUBUNIT RECC"/>
    <property type="match status" value="1"/>
</dbReference>
<dbReference type="PANTHER" id="PTHR30591:SF1">
    <property type="entry name" value="RECBCD ENZYME SUBUNIT RECC"/>
    <property type="match status" value="1"/>
</dbReference>
<dbReference type="Pfam" id="PF21445">
    <property type="entry name" value="ADDB_N"/>
    <property type="match status" value="1"/>
</dbReference>
<dbReference type="Pfam" id="PF12705">
    <property type="entry name" value="PDDEXK_1"/>
    <property type="match status" value="1"/>
</dbReference>
<dbReference type="Pfam" id="PF13361">
    <property type="entry name" value="UvrD_C"/>
    <property type="match status" value="1"/>
</dbReference>
<dbReference type="SUPFAM" id="SSF52540">
    <property type="entry name" value="P-loop containing nucleoside triphosphate hydrolases"/>
    <property type="match status" value="1"/>
</dbReference>
<dbReference type="PROSITE" id="PS51198">
    <property type="entry name" value="UVRD_HELICASE_ATP_BIND"/>
    <property type="match status" value="1"/>
</dbReference>
<dbReference type="PROSITE" id="PS51217">
    <property type="entry name" value="UVRD_HELICASE_CTER"/>
    <property type="match status" value="1"/>
</dbReference>
<protein>
    <recommendedName>
        <fullName evidence="1">ATP-dependent helicase/deoxyribonuclease subunit B</fullName>
        <ecNumber evidence="1">3.1.-.-</ecNumber>
    </recommendedName>
    <alternativeName>
        <fullName evidence="1">ATP-dependent helicase/nuclease subunit AddB</fullName>
    </alternativeName>
</protein>
<feature type="chain" id="PRO_0000379218" description="ATP-dependent helicase/deoxyribonuclease subunit B">
    <location>
        <begin position="1"/>
        <end position="1155"/>
    </location>
</feature>
<feature type="domain" description="UvrD-like helicase ATP-binding" evidence="1">
    <location>
        <begin position="1"/>
        <end position="278"/>
    </location>
</feature>
<feature type="domain" description="UvrD-like helicase C-terminal" evidence="1">
    <location>
        <begin position="270"/>
        <end position="584"/>
    </location>
</feature>
<feature type="binding site" evidence="1">
    <location>
        <begin position="9"/>
        <end position="16"/>
    </location>
    <ligand>
        <name>ATP</name>
        <dbReference type="ChEBI" id="CHEBI:30616"/>
    </ligand>
</feature>
<feature type="binding site" evidence="1">
    <location>
        <position position="785"/>
    </location>
    <ligand>
        <name>[4Fe-4S] cluster</name>
        <dbReference type="ChEBI" id="CHEBI:49883"/>
    </ligand>
</feature>
<feature type="binding site" evidence="1">
    <location>
        <position position="1112"/>
    </location>
    <ligand>
        <name>[4Fe-4S] cluster</name>
        <dbReference type="ChEBI" id="CHEBI:49883"/>
    </ligand>
</feature>
<feature type="binding site" evidence="1">
    <location>
        <position position="1115"/>
    </location>
    <ligand>
        <name>[4Fe-4S] cluster</name>
        <dbReference type="ChEBI" id="CHEBI:49883"/>
    </ligand>
</feature>
<feature type="binding site" evidence="1">
    <location>
        <position position="1121"/>
    </location>
    <ligand>
        <name>[4Fe-4S] cluster</name>
        <dbReference type="ChEBI" id="CHEBI:49883"/>
    </ligand>
</feature>
<organism>
    <name type="scientific">Staphylococcus carnosus (strain TM300)</name>
    <dbReference type="NCBI Taxonomy" id="396513"/>
    <lineage>
        <taxon>Bacteria</taxon>
        <taxon>Bacillati</taxon>
        <taxon>Bacillota</taxon>
        <taxon>Bacilli</taxon>
        <taxon>Bacillales</taxon>
        <taxon>Staphylococcaceae</taxon>
        <taxon>Staphylococcus</taxon>
    </lineage>
</organism>
<keyword id="KW-0004">4Fe-4S</keyword>
<keyword id="KW-0067">ATP-binding</keyword>
<keyword id="KW-0227">DNA damage</keyword>
<keyword id="KW-0234">DNA repair</keyword>
<keyword id="KW-0238">DNA-binding</keyword>
<keyword id="KW-0269">Exonuclease</keyword>
<keyword id="KW-0347">Helicase</keyword>
<keyword id="KW-0378">Hydrolase</keyword>
<keyword id="KW-0408">Iron</keyword>
<keyword id="KW-0411">Iron-sulfur</keyword>
<keyword id="KW-0479">Metal-binding</keyword>
<keyword id="KW-0540">Nuclease</keyword>
<keyword id="KW-0547">Nucleotide-binding</keyword>
<keyword id="KW-1185">Reference proteome</keyword>
<reference key="1">
    <citation type="journal article" date="2009" name="Appl. Environ. Microbiol.">
        <title>Genome analysis of the meat starter culture bacterium Staphylococcus carnosus TM300.</title>
        <authorList>
            <person name="Rosenstein R."/>
            <person name="Nerz C."/>
            <person name="Biswas L."/>
            <person name="Resch A."/>
            <person name="Raddatz G."/>
            <person name="Schuster S.C."/>
            <person name="Goetz F."/>
        </authorList>
    </citation>
    <scope>NUCLEOTIDE SEQUENCE [LARGE SCALE GENOMIC DNA]</scope>
    <source>
        <strain>TM300</strain>
    </source>
</reference>